<organism>
    <name type="scientific">Nitrobacter winogradskyi (strain ATCC 25391 / DSM 10237 / CIP 104748 / NCIMB 11846 / Nb-255)</name>
    <dbReference type="NCBI Taxonomy" id="323098"/>
    <lineage>
        <taxon>Bacteria</taxon>
        <taxon>Pseudomonadati</taxon>
        <taxon>Pseudomonadota</taxon>
        <taxon>Alphaproteobacteria</taxon>
        <taxon>Hyphomicrobiales</taxon>
        <taxon>Nitrobacteraceae</taxon>
        <taxon>Nitrobacter</taxon>
    </lineage>
</organism>
<feature type="chain" id="PRO_1000024600" description="ATP-dependent Clp protease ATP-binding subunit ClpX">
    <location>
        <begin position="1"/>
        <end position="424"/>
    </location>
</feature>
<feature type="domain" description="ClpX-type ZB" evidence="2">
    <location>
        <begin position="3"/>
        <end position="56"/>
    </location>
</feature>
<feature type="binding site" evidence="2">
    <location>
        <position position="15"/>
    </location>
    <ligand>
        <name>Zn(2+)</name>
        <dbReference type="ChEBI" id="CHEBI:29105"/>
    </ligand>
</feature>
<feature type="binding site" evidence="2">
    <location>
        <position position="18"/>
    </location>
    <ligand>
        <name>Zn(2+)</name>
        <dbReference type="ChEBI" id="CHEBI:29105"/>
    </ligand>
</feature>
<feature type="binding site" evidence="2">
    <location>
        <position position="37"/>
    </location>
    <ligand>
        <name>Zn(2+)</name>
        <dbReference type="ChEBI" id="CHEBI:29105"/>
    </ligand>
</feature>
<feature type="binding site" evidence="2">
    <location>
        <position position="40"/>
    </location>
    <ligand>
        <name>Zn(2+)</name>
        <dbReference type="ChEBI" id="CHEBI:29105"/>
    </ligand>
</feature>
<feature type="binding site" evidence="1">
    <location>
        <begin position="119"/>
        <end position="126"/>
    </location>
    <ligand>
        <name>ATP</name>
        <dbReference type="ChEBI" id="CHEBI:30616"/>
    </ligand>
</feature>
<name>CLPX_NITWN</name>
<dbReference type="EMBL" id="CP000115">
    <property type="protein sequence ID" value="ABA05158.1"/>
    <property type="molecule type" value="Genomic_DNA"/>
</dbReference>
<dbReference type="RefSeq" id="WP_011315154.1">
    <property type="nucleotide sequence ID" value="NC_007406.1"/>
</dbReference>
<dbReference type="SMR" id="Q3SRD3"/>
<dbReference type="STRING" id="323098.Nwi_1898"/>
<dbReference type="KEGG" id="nwi:Nwi_1898"/>
<dbReference type="eggNOG" id="COG1219">
    <property type="taxonomic scope" value="Bacteria"/>
</dbReference>
<dbReference type="HOGENOM" id="CLU_014218_8_2_5"/>
<dbReference type="OrthoDB" id="9804062at2"/>
<dbReference type="Proteomes" id="UP000002531">
    <property type="component" value="Chromosome"/>
</dbReference>
<dbReference type="GO" id="GO:0009376">
    <property type="term" value="C:HslUV protease complex"/>
    <property type="evidence" value="ECO:0007669"/>
    <property type="project" value="TreeGrafter"/>
</dbReference>
<dbReference type="GO" id="GO:0005524">
    <property type="term" value="F:ATP binding"/>
    <property type="evidence" value="ECO:0007669"/>
    <property type="project" value="UniProtKB-UniRule"/>
</dbReference>
<dbReference type="GO" id="GO:0016887">
    <property type="term" value="F:ATP hydrolysis activity"/>
    <property type="evidence" value="ECO:0007669"/>
    <property type="project" value="InterPro"/>
</dbReference>
<dbReference type="GO" id="GO:0140662">
    <property type="term" value="F:ATP-dependent protein folding chaperone"/>
    <property type="evidence" value="ECO:0007669"/>
    <property type="project" value="InterPro"/>
</dbReference>
<dbReference type="GO" id="GO:0046983">
    <property type="term" value="F:protein dimerization activity"/>
    <property type="evidence" value="ECO:0007669"/>
    <property type="project" value="InterPro"/>
</dbReference>
<dbReference type="GO" id="GO:0051082">
    <property type="term" value="F:unfolded protein binding"/>
    <property type="evidence" value="ECO:0007669"/>
    <property type="project" value="UniProtKB-UniRule"/>
</dbReference>
<dbReference type="GO" id="GO:0008270">
    <property type="term" value="F:zinc ion binding"/>
    <property type="evidence" value="ECO:0007669"/>
    <property type="project" value="InterPro"/>
</dbReference>
<dbReference type="GO" id="GO:0051301">
    <property type="term" value="P:cell division"/>
    <property type="evidence" value="ECO:0007669"/>
    <property type="project" value="TreeGrafter"/>
</dbReference>
<dbReference type="GO" id="GO:0051603">
    <property type="term" value="P:proteolysis involved in protein catabolic process"/>
    <property type="evidence" value="ECO:0007669"/>
    <property type="project" value="TreeGrafter"/>
</dbReference>
<dbReference type="CDD" id="cd19497">
    <property type="entry name" value="RecA-like_ClpX"/>
    <property type="match status" value="1"/>
</dbReference>
<dbReference type="FunFam" id="1.10.8.60:FF:000002">
    <property type="entry name" value="ATP-dependent Clp protease ATP-binding subunit ClpX"/>
    <property type="match status" value="1"/>
</dbReference>
<dbReference type="FunFam" id="3.40.50.300:FF:000005">
    <property type="entry name" value="ATP-dependent Clp protease ATP-binding subunit ClpX"/>
    <property type="match status" value="1"/>
</dbReference>
<dbReference type="Gene3D" id="1.10.8.60">
    <property type="match status" value="1"/>
</dbReference>
<dbReference type="Gene3D" id="6.20.220.10">
    <property type="entry name" value="ClpX chaperone, C4-type zinc finger domain"/>
    <property type="match status" value="1"/>
</dbReference>
<dbReference type="Gene3D" id="3.40.50.300">
    <property type="entry name" value="P-loop containing nucleotide triphosphate hydrolases"/>
    <property type="match status" value="1"/>
</dbReference>
<dbReference type="HAMAP" id="MF_00175">
    <property type="entry name" value="ClpX"/>
    <property type="match status" value="1"/>
</dbReference>
<dbReference type="InterPro" id="IPR003593">
    <property type="entry name" value="AAA+_ATPase"/>
</dbReference>
<dbReference type="InterPro" id="IPR050052">
    <property type="entry name" value="ATP-dep_Clp_protease_ClpX"/>
</dbReference>
<dbReference type="InterPro" id="IPR003959">
    <property type="entry name" value="ATPase_AAA_core"/>
</dbReference>
<dbReference type="InterPro" id="IPR019489">
    <property type="entry name" value="Clp_ATPase_C"/>
</dbReference>
<dbReference type="InterPro" id="IPR004487">
    <property type="entry name" value="Clp_protease_ATP-bd_su_ClpX"/>
</dbReference>
<dbReference type="InterPro" id="IPR046425">
    <property type="entry name" value="ClpX_bact"/>
</dbReference>
<dbReference type="InterPro" id="IPR027417">
    <property type="entry name" value="P-loop_NTPase"/>
</dbReference>
<dbReference type="InterPro" id="IPR010603">
    <property type="entry name" value="Znf_CppX_C4"/>
</dbReference>
<dbReference type="InterPro" id="IPR038366">
    <property type="entry name" value="Znf_CppX_C4_sf"/>
</dbReference>
<dbReference type="NCBIfam" id="TIGR00382">
    <property type="entry name" value="clpX"/>
    <property type="match status" value="1"/>
</dbReference>
<dbReference type="NCBIfam" id="NF003745">
    <property type="entry name" value="PRK05342.1"/>
    <property type="match status" value="1"/>
</dbReference>
<dbReference type="PANTHER" id="PTHR48102:SF7">
    <property type="entry name" value="ATP-DEPENDENT CLP PROTEASE ATP-BINDING SUBUNIT CLPX-LIKE, MITOCHONDRIAL"/>
    <property type="match status" value="1"/>
</dbReference>
<dbReference type="PANTHER" id="PTHR48102">
    <property type="entry name" value="ATP-DEPENDENT CLP PROTEASE ATP-BINDING SUBUNIT CLPX-LIKE, MITOCHONDRIAL-RELATED"/>
    <property type="match status" value="1"/>
</dbReference>
<dbReference type="Pfam" id="PF07724">
    <property type="entry name" value="AAA_2"/>
    <property type="match status" value="1"/>
</dbReference>
<dbReference type="Pfam" id="PF10431">
    <property type="entry name" value="ClpB_D2-small"/>
    <property type="match status" value="1"/>
</dbReference>
<dbReference type="Pfam" id="PF06689">
    <property type="entry name" value="zf-C4_ClpX"/>
    <property type="match status" value="1"/>
</dbReference>
<dbReference type="SMART" id="SM00382">
    <property type="entry name" value="AAA"/>
    <property type="match status" value="1"/>
</dbReference>
<dbReference type="SMART" id="SM01086">
    <property type="entry name" value="ClpB_D2-small"/>
    <property type="match status" value="1"/>
</dbReference>
<dbReference type="SMART" id="SM00994">
    <property type="entry name" value="zf-C4_ClpX"/>
    <property type="match status" value="1"/>
</dbReference>
<dbReference type="SUPFAM" id="SSF57716">
    <property type="entry name" value="Glucocorticoid receptor-like (DNA-binding domain)"/>
    <property type="match status" value="1"/>
</dbReference>
<dbReference type="SUPFAM" id="SSF52540">
    <property type="entry name" value="P-loop containing nucleoside triphosphate hydrolases"/>
    <property type="match status" value="1"/>
</dbReference>
<dbReference type="PROSITE" id="PS51902">
    <property type="entry name" value="CLPX_ZB"/>
    <property type="match status" value="1"/>
</dbReference>
<comment type="function">
    <text evidence="1">ATP-dependent specificity component of the Clp protease. It directs the protease to specific substrates. Can perform chaperone functions in the absence of ClpP.</text>
</comment>
<comment type="subunit">
    <text evidence="1">Component of the ClpX-ClpP complex. Forms a hexameric ring that, in the presence of ATP, binds to fourteen ClpP subunits assembled into a disk-like structure with a central cavity, resembling the structure of eukaryotic proteasomes.</text>
</comment>
<comment type="similarity">
    <text evidence="1">Belongs to the ClpX chaperone family.</text>
</comment>
<evidence type="ECO:0000255" key="1">
    <source>
        <dbReference type="HAMAP-Rule" id="MF_00175"/>
    </source>
</evidence>
<evidence type="ECO:0000255" key="2">
    <source>
        <dbReference type="PROSITE-ProRule" id="PRU01250"/>
    </source>
</evidence>
<protein>
    <recommendedName>
        <fullName evidence="1">ATP-dependent Clp protease ATP-binding subunit ClpX</fullName>
    </recommendedName>
</protein>
<reference key="1">
    <citation type="journal article" date="2006" name="Appl. Environ. Microbiol.">
        <title>Genome sequence of the chemolithoautotrophic nitrite-oxidizing bacterium Nitrobacter winogradskyi Nb-255.</title>
        <authorList>
            <person name="Starkenburg S.R."/>
            <person name="Chain P.S.G."/>
            <person name="Sayavedra-Soto L.A."/>
            <person name="Hauser L."/>
            <person name="Land M.L."/>
            <person name="Larimer F.W."/>
            <person name="Malfatti S.A."/>
            <person name="Klotz M.G."/>
            <person name="Bottomley P.J."/>
            <person name="Arp D.J."/>
            <person name="Hickey W.J."/>
        </authorList>
    </citation>
    <scope>NUCLEOTIDE SEQUENCE [LARGE SCALE GENOMIC DNA]</scope>
    <source>
        <strain>ATCC 25391 / DSM 10237 / CIP 104748 / NCIMB 11846 / Nb-255</strain>
    </source>
</reference>
<sequence>MSKVGTGDSKNTLYCSFCGKSQHEVRKLIAGPTVFICDECVELCMDIIREENKSSLVKSRDGIPTPKEICKVLDDYVIGQGHAKKVLSVAVHNHYKRLNHQTKHNDVELAKSNILLIGPTGSGKTLLAQTLARILDVPFTMADATTLTEAGYVGEDVENIILKLLQSADYNVERAQRGIVYIDEIDKISRKSDNPSITRDVSGEGVQQALLKIMEGTVASVPPQGGRKHPQQEFLQVDTTNILFICGGAFSGLEKIISARGRTTSIGFAAQVLAPEDRRTGEIFRHVEPEDLLKYGLIPEFVGRLPVVATLEDLDEASLKKILTDPKNALVKQYQRLFEMENIELTFADEALGAVARKAIERKTGARGLRSILESILLETMFDLPGLEGVEEVVISREVVEGTARPLYIYADRADRASETSASA</sequence>
<keyword id="KW-0067">ATP-binding</keyword>
<keyword id="KW-0143">Chaperone</keyword>
<keyword id="KW-0479">Metal-binding</keyword>
<keyword id="KW-0547">Nucleotide-binding</keyword>
<keyword id="KW-1185">Reference proteome</keyword>
<keyword id="KW-0862">Zinc</keyword>
<accession>Q3SRD3</accession>
<proteinExistence type="inferred from homology"/>
<gene>
    <name evidence="1" type="primary">clpX</name>
    <name type="ordered locus">Nwi_1898</name>
</gene>